<keyword id="KW-1003">Cell membrane</keyword>
<keyword id="KW-0143">Chaperone</keyword>
<keyword id="KW-0449">Lipoprotein</keyword>
<keyword id="KW-0472">Membrane</keyword>
<keyword id="KW-0564">Palmitate</keyword>
<keyword id="KW-0653">Protein transport</keyword>
<keyword id="KW-1185">Reference proteome</keyword>
<keyword id="KW-0732">Signal</keyword>
<keyword id="KW-0812">Transmembrane</keyword>
<keyword id="KW-1133">Transmembrane helix</keyword>
<keyword id="KW-0813">Transport</keyword>
<accession>Q97NI6</accession>
<protein>
    <recommendedName>
        <fullName evidence="1">Membrane protein insertase YidC 2</fullName>
    </recommendedName>
    <alternativeName>
        <fullName evidence="1">Foldase YidC 2</fullName>
    </alternativeName>
    <alternativeName>
        <fullName evidence="1">Membrane integrase YidC 2</fullName>
    </alternativeName>
    <alternativeName>
        <fullName evidence="1">Membrane protein YidC 2</fullName>
    </alternativeName>
</protein>
<organism>
    <name type="scientific">Streptococcus pneumoniae serotype 4 (strain ATCC BAA-334 / TIGR4)</name>
    <dbReference type="NCBI Taxonomy" id="170187"/>
    <lineage>
        <taxon>Bacteria</taxon>
        <taxon>Bacillati</taxon>
        <taxon>Bacillota</taxon>
        <taxon>Bacilli</taxon>
        <taxon>Lactobacillales</taxon>
        <taxon>Streptococcaceae</taxon>
        <taxon>Streptococcus</taxon>
    </lineage>
</organism>
<name>YIDC2_STRPN</name>
<dbReference type="EMBL" id="AE005672">
    <property type="protein sequence ID" value="AAK76106.1"/>
    <property type="molecule type" value="Genomic_DNA"/>
</dbReference>
<dbReference type="PIR" id="A95239">
    <property type="entry name" value="A95239"/>
</dbReference>
<dbReference type="SMR" id="Q97NI6"/>
<dbReference type="PaxDb" id="170187-SP_2041"/>
<dbReference type="DNASU" id="932020"/>
<dbReference type="EnsemblBacteria" id="AAK76106">
    <property type="protein sequence ID" value="AAK76106"/>
    <property type="gene ID" value="SP_2041"/>
</dbReference>
<dbReference type="KEGG" id="spn:SP_2041"/>
<dbReference type="eggNOG" id="COG0706">
    <property type="taxonomic scope" value="Bacteria"/>
</dbReference>
<dbReference type="PhylomeDB" id="Q97NI6"/>
<dbReference type="Proteomes" id="UP000000585">
    <property type="component" value="Chromosome"/>
</dbReference>
<dbReference type="GO" id="GO:0005886">
    <property type="term" value="C:plasma membrane"/>
    <property type="evidence" value="ECO:0007669"/>
    <property type="project" value="UniProtKB-SubCell"/>
</dbReference>
<dbReference type="GO" id="GO:0032977">
    <property type="term" value="F:membrane insertase activity"/>
    <property type="evidence" value="ECO:0007669"/>
    <property type="project" value="InterPro"/>
</dbReference>
<dbReference type="GO" id="GO:0051205">
    <property type="term" value="P:protein insertion into membrane"/>
    <property type="evidence" value="ECO:0007669"/>
    <property type="project" value="TreeGrafter"/>
</dbReference>
<dbReference type="GO" id="GO:0015031">
    <property type="term" value="P:protein transport"/>
    <property type="evidence" value="ECO:0007669"/>
    <property type="project" value="UniProtKB-KW"/>
</dbReference>
<dbReference type="CDD" id="cd20070">
    <property type="entry name" value="5TM_YidC_Alb3"/>
    <property type="match status" value="1"/>
</dbReference>
<dbReference type="HAMAP" id="MF_01811">
    <property type="entry name" value="YidC_type2"/>
    <property type="match status" value="1"/>
</dbReference>
<dbReference type="InterPro" id="IPR001708">
    <property type="entry name" value="YidC/ALB3/OXA1/COX18"/>
</dbReference>
<dbReference type="InterPro" id="IPR028055">
    <property type="entry name" value="YidC/Oxa/ALB_C"/>
</dbReference>
<dbReference type="InterPro" id="IPR023060">
    <property type="entry name" value="YidC/YidC1/YidC2_Firmicutes"/>
</dbReference>
<dbReference type="InterPro" id="IPR047196">
    <property type="entry name" value="YidC_ALB_C"/>
</dbReference>
<dbReference type="NCBIfam" id="TIGR03592">
    <property type="entry name" value="yidC_oxa1_cterm"/>
    <property type="match status" value="1"/>
</dbReference>
<dbReference type="PANTHER" id="PTHR12428:SF65">
    <property type="entry name" value="CYTOCHROME C OXIDASE ASSEMBLY PROTEIN COX18, MITOCHONDRIAL"/>
    <property type="match status" value="1"/>
</dbReference>
<dbReference type="PANTHER" id="PTHR12428">
    <property type="entry name" value="OXA1"/>
    <property type="match status" value="1"/>
</dbReference>
<dbReference type="Pfam" id="PF02096">
    <property type="entry name" value="60KD_IMP"/>
    <property type="match status" value="1"/>
</dbReference>
<dbReference type="PRINTS" id="PR00701">
    <property type="entry name" value="60KDINNERMP"/>
</dbReference>
<dbReference type="PROSITE" id="PS51257">
    <property type="entry name" value="PROKAR_LIPOPROTEIN"/>
    <property type="match status" value="1"/>
</dbReference>
<reference key="1">
    <citation type="journal article" date="2001" name="Science">
        <title>Complete genome sequence of a virulent isolate of Streptococcus pneumoniae.</title>
        <authorList>
            <person name="Tettelin H."/>
            <person name="Nelson K.E."/>
            <person name="Paulsen I.T."/>
            <person name="Eisen J.A."/>
            <person name="Read T.D."/>
            <person name="Peterson S.N."/>
            <person name="Heidelberg J.F."/>
            <person name="DeBoy R.T."/>
            <person name="Haft D.H."/>
            <person name="Dodson R.J."/>
            <person name="Durkin A.S."/>
            <person name="Gwinn M.L."/>
            <person name="Kolonay J.F."/>
            <person name="Nelson W.C."/>
            <person name="Peterson J.D."/>
            <person name="Umayam L.A."/>
            <person name="White O."/>
            <person name="Salzberg S.L."/>
            <person name="Lewis M.R."/>
            <person name="Radune D."/>
            <person name="Holtzapple E.K."/>
            <person name="Khouri H.M."/>
            <person name="Wolf A.M."/>
            <person name="Utterback T.R."/>
            <person name="Hansen C.L."/>
            <person name="McDonald L.A."/>
            <person name="Feldblyum T.V."/>
            <person name="Angiuoli S.V."/>
            <person name="Dickinson T."/>
            <person name="Hickey E.K."/>
            <person name="Holt I.E."/>
            <person name="Loftus B.J."/>
            <person name="Yang F."/>
            <person name="Smith H.O."/>
            <person name="Venter J.C."/>
            <person name="Dougherty B.A."/>
            <person name="Morrison D.A."/>
            <person name="Hollingshead S.K."/>
            <person name="Fraser C.M."/>
        </authorList>
    </citation>
    <scope>NUCLEOTIDE SEQUENCE [LARGE SCALE GENOMIC DNA]</scope>
    <source>
        <strain>ATCC BAA-334 / TIGR4</strain>
    </source>
</reference>
<gene>
    <name evidence="1" type="primary">yidC2</name>
    <name type="ordered locus">SP_2041</name>
</gene>
<evidence type="ECO:0000255" key="1">
    <source>
        <dbReference type="HAMAP-Rule" id="MF_01811"/>
    </source>
</evidence>
<feature type="signal peptide" evidence="1">
    <location>
        <begin position="1"/>
        <end position="20"/>
    </location>
</feature>
<feature type="chain" id="PRO_0000020406" description="Membrane protein insertase YidC 2">
    <location>
        <begin position="21"/>
        <end position="274"/>
    </location>
</feature>
<feature type="transmembrane region" description="Helical" evidence="1">
    <location>
        <begin position="56"/>
        <end position="76"/>
    </location>
</feature>
<feature type="transmembrane region" description="Helical" evidence="1">
    <location>
        <begin position="128"/>
        <end position="148"/>
    </location>
</feature>
<feature type="transmembrane region" description="Helical" evidence="1">
    <location>
        <begin position="167"/>
        <end position="187"/>
    </location>
</feature>
<feature type="transmembrane region" description="Helical" evidence="1">
    <location>
        <begin position="205"/>
        <end position="225"/>
    </location>
</feature>
<feature type="lipid moiety-binding region" description="N-palmitoyl cysteine" evidence="1">
    <location>
        <position position="21"/>
    </location>
</feature>
<feature type="lipid moiety-binding region" description="S-diacylglycerol cysteine" evidence="1">
    <location>
        <position position="21"/>
    </location>
</feature>
<proteinExistence type="inferred from homology"/>
<sequence length="274" mass="31057">MKKKLKLTSLLGLSLLIMTACATNGVTSDITAESADFWSKLVYFFAEIIRFLSFDISIGVGIILFTVLIRTVLLPVFQVQMVASRKMQEAQPRIKALREQYPGRDMESRTKLEQEMRKVFKEMGVRQSDSLWPILIQMPVILALFQALSRVDFLKTGHFLWINLGSVDTTLVLPILAAVFTFLSTWLSNKALSERNGATTAMMYGIPVLIFIFAVYAPGGVALYWTVSNAYQVLQTYFLNNPFKIIAEREAVVQAQKDLENRKRKAKKKAQKTK</sequence>
<comment type="function">
    <text evidence="1">Required for the insertion and/or proper folding and/or complex formation of integral membrane proteins into the membrane. Involved in integration of membrane proteins that insert both dependently and independently of the Sec translocase complex, as well as at least some lipoproteins.</text>
</comment>
<comment type="subcellular location">
    <subcellularLocation>
        <location evidence="1">Cell membrane</location>
        <topology evidence="1">Multi-pass membrane protein</topology>
    </subcellularLocation>
</comment>
<comment type="similarity">
    <text evidence="1">Belongs to the OXA1/ALB3/YidC family. Type 2 subfamily.</text>
</comment>